<sequence>MSGNSQLPPDVIGFICSKYDIILASTSPRRYEILHDIMGITDLKTMVSTFEENLDKMNYSTDPIGYVCDTSWHKAQNIIEILTDYEDENPNEIDKPKLIICADTIIIDKSGRIYEKPKTKEVQKKFLMKFCYEDDEPVNVVTAVTLIKWYGRENFELVPFRDETKVYFDNKIPLRILEEYVESGDGLEVGGGFKIQGQGAILIEKIEGDYYNVVGLPLNKTFKGLYAEANSI</sequence>
<feature type="chain" id="PRO_0000123091" description="dTTP/UTP pyrophosphatase">
    <location>
        <begin position="1"/>
        <end position="232"/>
    </location>
</feature>
<feature type="active site" description="Proton acceptor" evidence="5">
    <location>
        <position position="103"/>
    </location>
</feature>
<feature type="site" description="Important for substrate specificity" evidence="5">
    <location>
        <position position="29"/>
    </location>
</feature>
<feature type="site" description="Important for substrate specificity" evidence="5">
    <location>
        <position position="104"/>
    </location>
</feature>
<feature type="site" description="Important for substrate specificity" evidence="5">
    <location>
        <position position="196"/>
    </location>
</feature>
<feature type="mutagenesis site" description="Loss of activity." evidence="2">
    <original>S</original>
    <variation>A</variation>
    <location>
        <position position="25"/>
    </location>
</feature>
<feature type="mutagenesis site" description="No change in activity." evidence="2">
    <original>T</original>
    <variation>A</variation>
    <location>
        <position position="26"/>
    </location>
</feature>
<feature type="mutagenesis site" description="No change in activity." evidence="2">
    <original>R</original>
    <variation>A</variation>
    <location>
        <position position="29"/>
    </location>
</feature>
<feature type="mutagenesis site" description="Loss of activity." evidence="2">
    <original>R</original>
    <variation>A</variation>
    <location>
        <position position="30"/>
    </location>
</feature>
<feature type="mutagenesis site" description="Loss of activity." evidence="2">
    <original>Y</original>
    <variation>A</variation>
    <location>
        <position position="66"/>
    </location>
</feature>
<feature type="mutagenesis site" description="Loss of activity." evidence="2">
    <original>K</original>
    <variation>A</variation>
    <location>
        <position position="74"/>
    </location>
</feature>
<feature type="mutagenesis site" description="No change in activity." evidence="2">
    <original>Q</original>
    <variation>A</variation>
    <location>
        <position position="76"/>
    </location>
</feature>
<feature type="mutagenesis site" description="No change in activity." evidence="2">
    <original>N</original>
    <variation>A</variation>
    <location>
        <position position="77"/>
    </location>
</feature>
<feature type="mutagenesis site" description="Loss of activity." evidence="2">
    <original>D</original>
    <variation>A</variation>
    <location>
        <position position="103"/>
    </location>
</feature>
<feature type="mutagenesis site" description="Loss of activity." evidence="2">
    <original>T</original>
    <variation>A</variation>
    <location>
        <position position="104"/>
    </location>
</feature>
<feature type="mutagenesis site" description="Loss of activity." evidence="2">
    <original>E</original>
    <variation>A</variation>
    <location>
        <position position="115"/>
    </location>
</feature>
<feature type="mutagenesis site" description="Loss of activity." evidence="2">
    <original>K</original>
    <variation>A</variation>
    <location>
        <position position="116"/>
    </location>
</feature>
<feature type="mutagenesis site" description="Decrease in activity." evidence="2">
    <original>E</original>
    <variation>A</variation>
    <location>
        <position position="188"/>
    </location>
</feature>
<feature type="mutagenesis site" description="Decrease in activity." evidence="2">
    <original>F</original>
    <variation>A</variation>
    <location>
        <position position="193"/>
    </location>
</feature>
<feature type="mutagenesis site" description="No change in activity." evidence="2">
    <original>K</original>
    <variation>A</variation>
    <location>
        <position position="194"/>
    </location>
</feature>
<feature type="mutagenesis site" description="Loss of activity." evidence="2">
    <original>Q</original>
    <variation>A</variation>
    <variation>E</variation>
    <location>
        <position position="196"/>
    </location>
</feature>
<proteinExistence type="evidence at protein level"/>
<protein>
    <recommendedName>
        <fullName evidence="4">dTTP/UTP pyrophosphatase</fullName>
        <shortName evidence="4">dTTPase/UTPase</shortName>
        <ecNumber evidence="2">3.6.1.9</ecNumber>
    </recommendedName>
    <alternativeName>
        <fullName>Maf-like protein YOR111W</fullName>
    </alternativeName>
    <alternativeName>
        <fullName evidence="3">Nucleoside triphosphate pyrophosphatase</fullName>
    </alternativeName>
    <alternativeName>
        <fullName evidence="3">Nucleotide pyrophosphatase</fullName>
        <shortName evidence="4">Nucleotide PPase</shortName>
    </alternativeName>
</protein>
<name>NTPPA_YEAST</name>
<keyword id="KW-0963">Cytoplasm</keyword>
<keyword id="KW-0378">Hydrolase</keyword>
<keyword id="KW-0546">Nucleotide metabolism</keyword>
<keyword id="KW-1185">Reference proteome</keyword>
<reference key="1">
    <citation type="journal article" date="1996" name="Yeast">
        <title>Sequencing and analysis of 51 kb on the right arm of chromosome XV from Saccharomyces cerevisiae reveals 30 open reading frames.</title>
        <authorList>
            <person name="Wiemann S."/>
            <person name="Rechmann S."/>
            <person name="Benes V."/>
            <person name="Voss H."/>
            <person name="Schwager C."/>
            <person name="Vlcek C."/>
            <person name="Stegemann J."/>
            <person name="Zimmermann J."/>
            <person name="Erfle H."/>
            <person name="Paces V."/>
            <person name="Ansorge W."/>
        </authorList>
    </citation>
    <scope>NUCLEOTIDE SEQUENCE [GENOMIC DNA]</scope>
    <source>
        <strain>ATCC 96604 / S288c / FY1679</strain>
    </source>
</reference>
<reference key="2">
    <citation type="journal article" date="1997" name="Yeast">
        <title>DNA sequencing and analysis of 130 kb from yeast chromosome XV.</title>
        <authorList>
            <person name="Voss H."/>
            <person name="Benes V."/>
            <person name="Andrade M.A."/>
            <person name="Valencia A."/>
            <person name="Rechmann S."/>
            <person name="Teodoru C."/>
            <person name="Schwager C."/>
            <person name="Paces V."/>
            <person name="Sander C."/>
            <person name="Ansorge W."/>
        </authorList>
    </citation>
    <scope>NUCLEOTIDE SEQUENCE [GENOMIC DNA]</scope>
</reference>
<reference key="3">
    <citation type="journal article" date="1997" name="Nature">
        <title>The nucleotide sequence of Saccharomyces cerevisiae chromosome XV.</title>
        <authorList>
            <person name="Dujon B."/>
            <person name="Albermann K."/>
            <person name="Aldea M."/>
            <person name="Alexandraki D."/>
            <person name="Ansorge W."/>
            <person name="Arino J."/>
            <person name="Benes V."/>
            <person name="Bohn C."/>
            <person name="Bolotin-Fukuhara M."/>
            <person name="Bordonne R."/>
            <person name="Boyer J."/>
            <person name="Camasses A."/>
            <person name="Casamayor A."/>
            <person name="Casas C."/>
            <person name="Cheret G."/>
            <person name="Cziepluch C."/>
            <person name="Daignan-Fornier B."/>
            <person name="Dang V.-D."/>
            <person name="de Haan M."/>
            <person name="Delius H."/>
            <person name="Durand P."/>
            <person name="Fairhead C."/>
            <person name="Feldmann H."/>
            <person name="Gaillon L."/>
            <person name="Galisson F."/>
            <person name="Gamo F.-J."/>
            <person name="Gancedo C."/>
            <person name="Goffeau A."/>
            <person name="Goulding S.E."/>
            <person name="Grivell L.A."/>
            <person name="Habbig B."/>
            <person name="Hand N.J."/>
            <person name="Hani J."/>
            <person name="Hattenhorst U."/>
            <person name="Hebling U."/>
            <person name="Hernando Y."/>
            <person name="Herrero E."/>
            <person name="Heumann K."/>
            <person name="Hiesel R."/>
            <person name="Hilger F."/>
            <person name="Hofmann B."/>
            <person name="Hollenberg C.P."/>
            <person name="Hughes B."/>
            <person name="Jauniaux J.-C."/>
            <person name="Kalogeropoulos A."/>
            <person name="Katsoulou C."/>
            <person name="Kordes E."/>
            <person name="Lafuente M.J."/>
            <person name="Landt O."/>
            <person name="Louis E.J."/>
            <person name="Maarse A.C."/>
            <person name="Madania A."/>
            <person name="Mannhaupt G."/>
            <person name="Marck C."/>
            <person name="Martin R.P."/>
            <person name="Mewes H.-W."/>
            <person name="Michaux G."/>
            <person name="Paces V."/>
            <person name="Parle-McDermott A.G."/>
            <person name="Pearson B.M."/>
            <person name="Perrin A."/>
            <person name="Pettersson B."/>
            <person name="Poch O."/>
            <person name="Pohl T.M."/>
            <person name="Poirey R."/>
            <person name="Portetelle D."/>
            <person name="Pujol A."/>
            <person name="Purnelle B."/>
            <person name="Ramezani Rad M."/>
            <person name="Rechmann S."/>
            <person name="Schwager C."/>
            <person name="Schweizer M."/>
            <person name="Sor F."/>
            <person name="Sterky F."/>
            <person name="Tarassov I.A."/>
            <person name="Teodoru C."/>
            <person name="Tettelin H."/>
            <person name="Thierry A."/>
            <person name="Tobiasch E."/>
            <person name="Tzermia M."/>
            <person name="Uhlen M."/>
            <person name="Unseld M."/>
            <person name="Valens M."/>
            <person name="Vandenbol M."/>
            <person name="Vetter I."/>
            <person name="Vlcek C."/>
            <person name="Voet M."/>
            <person name="Volckaert G."/>
            <person name="Voss H."/>
            <person name="Wambutt R."/>
            <person name="Wedler H."/>
            <person name="Wiemann S."/>
            <person name="Winsor B."/>
            <person name="Wolfe K.H."/>
            <person name="Zollner A."/>
            <person name="Zumstein E."/>
            <person name="Kleine K."/>
        </authorList>
    </citation>
    <scope>NUCLEOTIDE SEQUENCE [LARGE SCALE GENOMIC DNA]</scope>
    <source>
        <strain>ATCC 204508 / S288c</strain>
    </source>
</reference>
<reference key="4">
    <citation type="journal article" date="2014" name="G3 (Bethesda)">
        <title>The reference genome sequence of Saccharomyces cerevisiae: Then and now.</title>
        <authorList>
            <person name="Engel S.R."/>
            <person name="Dietrich F.S."/>
            <person name="Fisk D.G."/>
            <person name="Binkley G."/>
            <person name="Balakrishnan R."/>
            <person name="Costanzo M.C."/>
            <person name="Dwight S.S."/>
            <person name="Hitz B.C."/>
            <person name="Karra K."/>
            <person name="Nash R.S."/>
            <person name="Weng S."/>
            <person name="Wong E.D."/>
            <person name="Lloyd P."/>
            <person name="Skrzypek M.S."/>
            <person name="Miyasato S.R."/>
            <person name="Simison M."/>
            <person name="Cherry J.M."/>
        </authorList>
    </citation>
    <scope>GENOME REANNOTATION</scope>
    <source>
        <strain>ATCC 204508 / S288c</strain>
    </source>
</reference>
<reference key="5">
    <citation type="journal article" date="2007" name="Genome Res.">
        <title>Approaching a complete repository of sequence-verified protein-encoding clones for Saccharomyces cerevisiae.</title>
        <authorList>
            <person name="Hu Y."/>
            <person name="Rolfs A."/>
            <person name="Bhullar B."/>
            <person name="Murthy T.V.S."/>
            <person name="Zhu C."/>
            <person name="Berger M.F."/>
            <person name="Camargo A.A."/>
            <person name="Kelley F."/>
            <person name="McCarron S."/>
            <person name="Jepson D."/>
            <person name="Richardson A."/>
            <person name="Raphael J."/>
            <person name="Moreira D."/>
            <person name="Taycher E."/>
            <person name="Zuo D."/>
            <person name="Mohr S."/>
            <person name="Kane M.F."/>
            <person name="Williamson J."/>
            <person name="Simpson A.J.G."/>
            <person name="Bulyk M.L."/>
            <person name="Harlow E."/>
            <person name="Marsischky G."/>
            <person name="Kolodner R.D."/>
            <person name="LaBaer J."/>
        </authorList>
    </citation>
    <scope>NUCLEOTIDE SEQUENCE [GENOMIC DNA]</scope>
    <source>
        <strain>ATCC 204508 / S288c</strain>
    </source>
</reference>
<reference key="6">
    <citation type="journal article" date="2003" name="Nature">
        <title>Global analysis of protein expression in yeast.</title>
        <authorList>
            <person name="Ghaemmaghami S."/>
            <person name="Huh W.-K."/>
            <person name="Bower K."/>
            <person name="Howson R.W."/>
            <person name="Belle A."/>
            <person name="Dephoure N."/>
            <person name="O'Shea E.K."/>
            <person name="Weissman J.S."/>
        </authorList>
    </citation>
    <scope>LEVEL OF PROTEIN EXPRESSION [LARGE SCALE ANALYSIS]</scope>
</reference>
<reference key="7">
    <citation type="journal article" date="2013" name="Chem. Biol.">
        <title>Biochemical and structural studies of conserved Maf proteins revealed nucleotide pyrophosphatases with a preference for modified nucleotides.</title>
        <authorList>
            <person name="Tchigvintsev A."/>
            <person name="Tchigvintsev D."/>
            <person name="Flick R."/>
            <person name="Popovic A."/>
            <person name="Dong A."/>
            <person name="Xu X."/>
            <person name="Brown G."/>
            <person name="Lu W."/>
            <person name="Wu H."/>
            <person name="Cui H."/>
            <person name="Dombrowski L."/>
            <person name="Joo J.C."/>
            <person name="Beloglazova N."/>
            <person name="Min J."/>
            <person name="Savchenko A."/>
            <person name="Caudy A.A."/>
            <person name="Rabinowitz J.D."/>
            <person name="Murzin A.G."/>
            <person name="Yakunin A.F."/>
        </authorList>
    </citation>
    <scope>FUNCTION</scope>
    <scope>CATALYTIC ACTIVITY</scope>
    <scope>COFACTOR</scope>
    <scope>BIOPHYSICOCHEMICAL PROPERTIES</scope>
    <scope>ACTIVE SITE</scope>
    <scope>MUTAGENESIS OF SER-25; THR-26; ARG-29; ARG-30; TYR-66; LYS-74; GLN-76; ASN-77; ASP-103; THR-104; GLU-115; LYS-116; GLU-188; PHE-193; LYS-194 AND GLN-196</scope>
</reference>
<comment type="function">
    <text evidence="2">Nucleoside triphosphate pyrophosphatase that hydrolyzes dTTP and UTP. Can also hydrolyze the modified nucleotides 5-methyl-UTP (m(5)UTP) and pseudo-UTP. Has weak activity with CTP (PubMed:24210219). May have a dual role in cell division arrest and in preventing the incorporation of modified nucleotides into cellular nucleic acids (PubMed:24210219).</text>
</comment>
<comment type="catalytic activity">
    <reaction evidence="2">
        <text>dTTP + H2O = dTMP + diphosphate + H(+)</text>
        <dbReference type="Rhea" id="RHEA:28534"/>
        <dbReference type="ChEBI" id="CHEBI:15377"/>
        <dbReference type="ChEBI" id="CHEBI:15378"/>
        <dbReference type="ChEBI" id="CHEBI:33019"/>
        <dbReference type="ChEBI" id="CHEBI:37568"/>
        <dbReference type="ChEBI" id="CHEBI:63528"/>
        <dbReference type="EC" id="3.6.1.9"/>
    </reaction>
</comment>
<comment type="catalytic activity">
    <reaction evidence="2">
        <text>UTP + H2O = UMP + diphosphate + H(+)</text>
        <dbReference type="Rhea" id="RHEA:29395"/>
        <dbReference type="ChEBI" id="CHEBI:15377"/>
        <dbReference type="ChEBI" id="CHEBI:15378"/>
        <dbReference type="ChEBI" id="CHEBI:33019"/>
        <dbReference type="ChEBI" id="CHEBI:46398"/>
        <dbReference type="ChEBI" id="CHEBI:57865"/>
        <dbReference type="EC" id="3.6.1.9"/>
    </reaction>
</comment>
<comment type="catalytic activity">
    <reaction evidence="2">
        <text>5-methyl-UTP + H2O = 5-methyl-UMP + diphosphate + H(+)</text>
        <dbReference type="Rhea" id="RHEA:58736"/>
        <dbReference type="ChEBI" id="CHEBI:15377"/>
        <dbReference type="ChEBI" id="CHEBI:15378"/>
        <dbReference type="ChEBI" id="CHEBI:33019"/>
        <dbReference type="ChEBI" id="CHEBI:63527"/>
        <dbReference type="ChEBI" id="CHEBI:142797"/>
    </reaction>
</comment>
<comment type="catalytic activity">
    <reaction evidence="2">
        <text>psi-UTP + H2O = psi-UMP + diphosphate + H(+)</text>
        <dbReference type="Rhea" id="RHEA:58740"/>
        <dbReference type="ChEBI" id="CHEBI:15377"/>
        <dbReference type="ChEBI" id="CHEBI:15378"/>
        <dbReference type="ChEBI" id="CHEBI:33019"/>
        <dbReference type="ChEBI" id="CHEBI:58380"/>
        <dbReference type="ChEBI" id="CHEBI:142798"/>
    </reaction>
</comment>
<comment type="cofactor">
    <cofactor evidence="2">
        <name>a divalent metal cation</name>
        <dbReference type="ChEBI" id="CHEBI:60240"/>
    </cofactor>
</comment>
<comment type="biophysicochemical properties">
    <kinetics>
        <KM evidence="2">47.4 uM for dTTP</KM>
        <KM evidence="2">29.7 uM for UTP</KM>
        <KM evidence="2">72 uM for CTP</KM>
        <KM evidence="2">13 uM for m(5)UTP</KM>
        <KM evidence="2">20 uM for pseudo-UTP</KM>
        <text evidence="2">kcat is 5.7 sec(-1) with dTTP as substrate. kcat is 2.6 sec(-1) with UTP as substrate. kcat is 1.2 sec(-1) with CTP as substrate. kcat is 2.2 sec(-1) with m(5)UTP as substrate. kcat is 5.3 sec(-1) with pseudo-UTP as substrate.</text>
    </kinetics>
</comment>
<comment type="subcellular location">
    <subcellularLocation>
        <location evidence="4">Cytoplasm</location>
    </subcellularLocation>
</comment>
<comment type="miscellaneous">
    <text evidence="1">Present with 1940 molecules/cell in log phase SD medium.</text>
</comment>
<comment type="similarity">
    <text evidence="5">Belongs to the Maf family. YhdE subfamily.</text>
</comment>
<dbReference type="EC" id="3.6.1.9" evidence="2"/>
<dbReference type="EMBL" id="X94335">
    <property type="protein sequence ID" value="CAA64031.1"/>
    <property type="molecule type" value="Genomic_DNA"/>
</dbReference>
<dbReference type="EMBL" id="X90518">
    <property type="protein sequence ID" value="CAA62105.1"/>
    <property type="molecule type" value="Genomic_DNA"/>
</dbReference>
<dbReference type="EMBL" id="Z75019">
    <property type="protein sequence ID" value="CAA99309.1"/>
    <property type="molecule type" value="Genomic_DNA"/>
</dbReference>
<dbReference type="EMBL" id="AY692705">
    <property type="protein sequence ID" value="AAT92724.1"/>
    <property type="molecule type" value="Genomic_DNA"/>
</dbReference>
<dbReference type="EMBL" id="BK006948">
    <property type="protein sequence ID" value="DAA10886.1"/>
    <property type="molecule type" value="Genomic_DNA"/>
</dbReference>
<dbReference type="PIR" id="S60984">
    <property type="entry name" value="S60984"/>
</dbReference>
<dbReference type="RefSeq" id="NP_014754.3">
    <property type="nucleotide sequence ID" value="NM_001183530.3"/>
</dbReference>
<dbReference type="SMR" id="Q99210"/>
<dbReference type="BioGRID" id="34507">
    <property type="interactions" value="24"/>
</dbReference>
<dbReference type="DIP" id="DIP-1305N"/>
<dbReference type="FunCoup" id="Q99210">
    <property type="interactions" value="181"/>
</dbReference>
<dbReference type="IntAct" id="Q99210">
    <property type="interactions" value="7"/>
</dbReference>
<dbReference type="MINT" id="Q99210"/>
<dbReference type="STRING" id="4932.YOR111W"/>
<dbReference type="iPTMnet" id="Q99210"/>
<dbReference type="PaxDb" id="4932-YOR111W"/>
<dbReference type="PeptideAtlas" id="Q99210"/>
<dbReference type="EnsemblFungi" id="YOR111W_mRNA">
    <property type="protein sequence ID" value="YOR111W"/>
    <property type="gene ID" value="YOR111W"/>
</dbReference>
<dbReference type="GeneID" id="854278"/>
<dbReference type="KEGG" id="sce:YOR111W"/>
<dbReference type="AGR" id="SGD:S000005637"/>
<dbReference type="SGD" id="S000005637">
    <property type="gene designation" value="YOR111W"/>
</dbReference>
<dbReference type="VEuPathDB" id="FungiDB:YOR111W"/>
<dbReference type="eggNOG" id="KOG1509">
    <property type="taxonomic scope" value="Eukaryota"/>
</dbReference>
<dbReference type="GeneTree" id="ENSGT00940000168021"/>
<dbReference type="HOGENOM" id="CLU_040416_0_2_1"/>
<dbReference type="InParanoid" id="Q99210"/>
<dbReference type="OMA" id="VIGCDSV"/>
<dbReference type="OrthoDB" id="10267058at2759"/>
<dbReference type="BioCyc" id="YEAST:G3O-33640-MONOMER"/>
<dbReference type="BioGRID-ORCS" id="854278">
    <property type="hits" value="0 hits in 10 CRISPR screens"/>
</dbReference>
<dbReference type="PRO" id="PR:Q99210"/>
<dbReference type="Proteomes" id="UP000002311">
    <property type="component" value="Chromosome XV"/>
</dbReference>
<dbReference type="RNAct" id="Q99210">
    <property type="molecule type" value="protein"/>
</dbReference>
<dbReference type="GO" id="GO:0005737">
    <property type="term" value="C:cytoplasm"/>
    <property type="evidence" value="ECO:0007669"/>
    <property type="project" value="UniProtKB-SubCell"/>
</dbReference>
<dbReference type="GO" id="GO:0036218">
    <property type="term" value="F:dTTP diphosphatase activity"/>
    <property type="evidence" value="ECO:0007669"/>
    <property type="project" value="RHEA"/>
</dbReference>
<dbReference type="GO" id="GO:0047429">
    <property type="term" value="F:nucleoside triphosphate diphosphatase activity"/>
    <property type="evidence" value="ECO:0000318"/>
    <property type="project" value="GO_Central"/>
</dbReference>
<dbReference type="GO" id="GO:0036221">
    <property type="term" value="F:UTP diphosphatase activity"/>
    <property type="evidence" value="ECO:0007669"/>
    <property type="project" value="RHEA"/>
</dbReference>
<dbReference type="GO" id="GO:0009117">
    <property type="term" value="P:nucleotide metabolic process"/>
    <property type="evidence" value="ECO:0007669"/>
    <property type="project" value="UniProtKB-KW"/>
</dbReference>
<dbReference type="CDD" id="cd00555">
    <property type="entry name" value="Maf"/>
    <property type="match status" value="1"/>
</dbReference>
<dbReference type="Gene3D" id="3.90.950.10">
    <property type="match status" value="1"/>
</dbReference>
<dbReference type="HAMAP" id="MF_00528">
    <property type="entry name" value="Maf"/>
    <property type="match status" value="1"/>
</dbReference>
<dbReference type="InterPro" id="IPR029001">
    <property type="entry name" value="ITPase-like_fam"/>
</dbReference>
<dbReference type="InterPro" id="IPR003697">
    <property type="entry name" value="Maf-like"/>
</dbReference>
<dbReference type="NCBIfam" id="TIGR00172">
    <property type="entry name" value="maf"/>
    <property type="match status" value="1"/>
</dbReference>
<dbReference type="PANTHER" id="PTHR43213">
    <property type="entry name" value="BIFUNCTIONAL DTTP/UTP PYROPHOSPHATASE/METHYLTRANSFERASE PROTEIN-RELATED"/>
    <property type="match status" value="1"/>
</dbReference>
<dbReference type="PANTHER" id="PTHR43213:SF5">
    <property type="entry name" value="BIFUNCTIONAL DTTP_UTP PYROPHOSPHATASE_METHYLTRANSFERASE PROTEIN-RELATED"/>
    <property type="match status" value="1"/>
</dbReference>
<dbReference type="Pfam" id="PF02545">
    <property type="entry name" value="Maf"/>
    <property type="match status" value="1"/>
</dbReference>
<dbReference type="PIRSF" id="PIRSF006305">
    <property type="entry name" value="Maf"/>
    <property type="match status" value="1"/>
</dbReference>
<dbReference type="SUPFAM" id="SSF52972">
    <property type="entry name" value="ITPase-like"/>
    <property type="match status" value="1"/>
</dbReference>
<gene>
    <name type="ordered locus">YOR111W</name>
    <name type="ORF">O3237</name>
    <name type="ORF">YOR3237W</name>
</gene>
<evidence type="ECO:0000269" key="1">
    <source>
    </source>
</evidence>
<evidence type="ECO:0000269" key="2">
    <source>
    </source>
</evidence>
<evidence type="ECO:0000303" key="3">
    <source>
    </source>
</evidence>
<evidence type="ECO:0000305" key="4"/>
<evidence type="ECO:0000305" key="5">
    <source>
    </source>
</evidence>
<accession>Q99210</accession>
<accession>D6W2H0</accession>
<organism>
    <name type="scientific">Saccharomyces cerevisiae (strain ATCC 204508 / S288c)</name>
    <name type="common">Baker's yeast</name>
    <dbReference type="NCBI Taxonomy" id="559292"/>
    <lineage>
        <taxon>Eukaryota</taxon>
        <taxon>Fungi</taxon>
        <taxon>Dikarya</taxon>
        <taxon>Ascomycota</taxon>
        <taxon>Saccharomycotina</taxon>
        <taxon>Saccharomycetes</taxon>
        <taxon>Saccharomycetales</taxon>
        <taxon>Saccharomycetaceae</taxon>
        <taxon>Saccharomyces</taxon>
    </lineage>
</organism>